<evidence type="ECO:0000250" key="1"/>
<evidence type="ECO:0000250" key="2">
    <source>
        <dbReference type="UniProtKB" id="Q15031"/>
    </source>
</evidence>
<evidence type="ECO:0000255" key="3"/>
<evidence type="ECO:0000305" key="4"/>
<evidence type="ECO:0007744" key="5">
    <source>
    </source>
</evidence>
<comment type="catalytic activity">
    <reaction>
        <text>tRNA(Leu) + L-leucine + ATP = L-leucyl-tRNA(Leu) + AMP + diphosphate</text>
        <dbReference type="Rhea" id="RHEA:11688"/>
        <dbReference type="Rhea" id="RHEA-COMP:9613"/>
        <dbReference type="Rhea" id="RHEA-COMP:9622"/>
        <dbReference type="ChEBI" id="CHEBI:30616"/>
        <dbReference type="ChEBI" id="CHEBI:33019"/>
        <dbReference type="ChEBI" id="CHEBI:57427"/>
        <dbReference type="ChEBI" id="CHEBI:78442"/>
        <dbReference type="ChEBI" id="CHEBI:78494"/>
        <dbReference type="ChEBI" id="CHEBI:456215"/>
        <dbReference type="EC" id="6.1.1.4"/>
    </reaction>
</comment>
<comment type="subcellular location">
    <subcellularLocation>
        <location evidence="1">Mitochondrion matrix</location>
    </subcellularLocation>
</comment>
<comment type="similarity">
    <text evidence="4">Belongs to the class-I aminoacyl-tRNA synthetase family.</text>
</comment>
<name>SYLM_MOUSE</name>
<gene>
    <name type="primary">Lars2</name>
</gene>
<feature type="transit peptide" description="Mitochondrion" evidence="3">
    <location>
        <begin position="1"/>
        <end status="unknown"/>
    </location>
</feature>
<feature type="chain" id="PRO_0000035807" description="Probable leucine--tRNA ligase, mitochondrial">
    <location>
        <begin status="unknown"/>
        <end position="902"/>
    </location>
</feature>
<feature type="short sequence motif" description="'HIGH' region">
    <location>
        <begin position="91"/>
        <end position="101"/>
    </location>
</feature>
<feature type="short sequence motif" description="'KMSKS' region">
    <location>
        <begin position="638"/>
        <end position="642"/>
    </location>
</feature>
<feature type="binding site" evidence="1">
    <location>
        <position position="641"/>
    </location>
    <ligand>
        <name>ATP</name>
        <dbReference type="ChEBI" id="CHEBI:30616"/>
    </ligand>
</feature>
<feature type="modified residue" description="N6-acetyllysine" evidence="5">
    <location>
        <position position="67"/>
    </location>
</feature>
<feature type="modified residue" description="N6-acetyllysine" evidence="2">
    <location>
        <position position="235"/>
    </location>
</feature>
<sequence>MASTCQRLSFYVSPLKRQLVSRPPVILWERLIPGCSRSIYSATGKWTKEYTLQTRKDVEKWWHQQIKEQASRVSEEDKLKPKFYLLSMFPYPSGKLHMGHVRVYTLSDTIARFQKMRGMQVINPMGWDAFGLPAENAAIERNLHPESWTQSNIKHMRKQLDRLGLCFSWDREITTCLPDYYKWTQYLFIKLYEAGLAYQKEALVNWDPVDQTVLANEQVNEYGCSWRSGAKVEKKYLRQWFIKTTAYAKAMQDALADLPEWYGIKGMQAHWIGDCVGCHLDFTLKVDGEDTGEKLTAYTATPEAIYGISHVAISPSHGLLHGCSSVKKALQKALVPGRDCLTPVMAVSMLTLQEVPIVIMANPDLEGSLDSKIGIPSTSSEDTRLAQALGLPYSEVIEASPDGTERLSGSAEFTGMTRQDAFVALTRKARGMRVGGHVTSNKLKDWLISRQRYWGTPIPIVHCPACGPVPVPLQDLPVILPSIASLTGRGGSPLATALEWVNCSCPRCKGSAKRETDTMDTFVDSAWYYFRYTDPHNTQSPFGSALADFWMPVDLYIGGKEHAVMHLFYARFLSHFCHDQKMVKHREPFHKLLAQGLIKGQTFRLPSGQCLKKEDIDFTGPAPVCAKTKEKLEVTWEKMSKSKHNGVDPEEIVAQYGIDTIRLYILFAAPPEKDILWDVKTDALPGVLRWQQRLWSLTTRFIEARTSGTVPQPQLLNSKEKTKAQNLWEYKNAVIAQVTTHFTEDFALNSVVSQLMGLSSALSQASQRVVLHSPEFEDALCALLVMAAPLAPHVTSELWAGLTLVPSKLCDHYAWDSGVMLQAWPTVDSQFLQKPDMVQMAVLINNKACGKIPVPQHVAQDQDKVHELVLQSELGMKLLQGRSIKKAFLSPRTALINFLVQE</sequence>
<organism>
    <name type="scientific">Mus musculus</name>
    <name type="common">Mouse</name>
    <dbReference type="NCBI Taxonomy" id="10090"/>
    <lineage>
        <taxon>Eukaryota</taxon>
        <taxon>Metazoa</taxon>
        <taxon>Chordata</taxon>
        <taxon>Craniata</taxon>
        <taxon>Vertebrata</taxon>
        <taxon>Euteleostomi</taxon>
        <taxon>Mammalia</taxon>
        <taxon>Eutheria</taxon>
        <taxon>Euarchontoglires</taxon>
        <taxon>Glires</taxon>
        <taxon>Rodentia</taxon>
        <taxon>Myomorpha</taxon>
        <taxon>Muroidea</taxon>
        <taxon>Muridae</taxon>
        <taxon>Murinae</taxon>
        <taxon>Mus</taxon>
        <taxon>Mus</taxon>
    </lineage>
</organism>
<dbReference type="EC" id="6.1.1.4"/>
<dbReference type="EMBL" id="AJ428066">
    <property type="protein sequence ID" value="CAD20988.1"/>
    <property type="molecule type" value="mRNA"/>
</dbReference>
<dbReference type="EMBL" id="BC080303">
    <property type="protein sequence ID" value="AAH80303.1"/>
    <property type="molecule type" value="mRNA"/>
</dbReference>
<dbReference type="EMBL" id="BC138206">
    <property type="protein sequence ID" value="AAI38207.1"/>
    <property type="molecule type" value="mRNA"/>
</dbReference>
<dbReference type="EMBL" id="BC145982">
    <property type="protein sequence ID" value="AAI45983.1"/>
    <property type="molecule type" value="mRNA"/>
</dbReference>
<dbReference type="CCDS" id="CCDS23659.1"/>
<dbReference type="RefSeq" id="NP_001335096.1">
    <property type="nucleotide sequence ID" value="NM_001348167.2"/>
</dbReference>
<dbReference type="RefSeq" id="NP_001335097.1">
    <property type="nucleotide sequence ID" value="NM_001348168.1"/>
</dbReference>
<dbReference type="RefSeq" id="NP_694808.1">
    <property type="nucleotide sequence ID" value="NM_153168.4"/>
</dbReference>
<dbReference type="SMR" id="Q8VDC0"/>
<dbReference type="BioGRID" id="221873">
    <property type="interactions" value="6"/>
</dbReference>
<dbReference type="FunCoup" id="Q8VDC0">
    <property type="interactions" value="2084"/>
</dbReference>
<dbReference type="STRING" id="10090.ENSMUSP00000036710"/>
<dbReference type="GlyGen" id="Q8VDC0">
    <property type="glycosylation" value="2 sites, 1 N-linked glycan (1 site), 1 O-linked glycan (1 site)"/>
</dbReference>
<dbReference type="iPTMnet" id="Q8VDC0"/>
<dbReference type="PhosphoSitePlus" id="Q8VDC0"/>
<dbReference type="SwissPalm" id="Q8VDC0"/>
<dbReference type="jPOST" id="Q8VDC0"/>
<dbReference type="PaxDb" id="10090-ENSMUSP00000036710"/>
<dbReference type="ProteomicsDB" id="253440"/>
<dbReference type="Pumba" id="Q8VDC0"/>
<dbReference type="Antibodypedia" id="29557">
    <property type="antibodies" value="165 antibodies from 25 providers"/>
</dbReference>
<dbReference type="DNASU" id="102436"/>
<dbReference type="Ensembl" id="ENSMUST00000038863.9">
    <property type="protein sequence ID" value="ENSMUSP00000036710.8"/>
    <property type="gene ID" value="ENSMUSG00000035202.9"/>
</dbReference>
<dbReference type="GeneID" id="102436"/>
<dbReference type="KEGG" id="mmu:102436"/>
<dbReference type="UCSC" id="uc009sgd.1">
    <property type="organism name" value="mouse"/>
</dbReference>
<dbReference type="AGR" id="MGI:2142973"/>
<dbReference type="CTD" id="23395"/>
<dbReference type="MGI" id="MGI:2142973">
    <property type="gene designation" value="Lars2"/>
</dbReference>
<dbReference type="VEuPathDB" id="HostDB:ENSMUSG00000035202"/>
<dbReference type="eggNOG" id="KOG0435">
    <property type="taxonomic scope" value="Eukaryota"/>
</dbReference>
<dbReference type="GeneTree" id="ENSGT00390000015114"/>
<dbReference type="HOGENOM" id="CLU_004427_0_1_1"/>
<dbReference type="InParanoid" id="Q8VDC0"/>
<dbReference type="OMA" id="GIEHACM"/>
<dbReference type="OrthoDB" id="15954at2759"/>
<dbReference type="PhylomeDB" id="Q8VDC0"/>
<dbReference type="TreeFam" id="TF105662"/>
<dbReference type="BRENDA" id="6.1.1.4">
    <property type="organism ID" value="3474"/>
</dbReference>
<dbReference type="BioGRID-ORCS" id="102436">
    <property type="hits" value="28 hits in 81 CRISPR screens"/>
</dbReference>
<dbReference type="ChiTaRS" id="Lars2">
    <property type="organism name" value="mouse"/>
</dbReference>
<dbReference type="PRO" id="PR:Q8VDC0"/>
<dbReference type="Proteomes" id="UP000000589">
    <property type="component" value="Chromosome 9"/>
</dbReference>
<dbReference type="RNAct" id="Q8VDC0">
    <property type="molecule type" value="protein"/>
</dbReference>
<dbReference type="Bgee" id="ENSMUSG00000035202">
    <property type="expression patterns" value="Expressed in animal zygote and 236 other cell types or tissues"/>
</dbReference>
<dbReference type="ExpressionAtlas" id="Q8VDC0">
    <property type="expression patterns" value="baseline and differential"/>
</dbReference>
<dbReference type="GO" id="GO:0005759">
    <property type="term" value="C:mitochondrial matrix"/>
    <property type="evidence" value="ECO:0007669"/>
    <property type="project" value="UniProtKB-SubCell"/>
</dbReference>
<dbReference type="GO" id="GO:0005739">
    <property type="term" value="C:mitochondrion"/>
    <property type="evidence" value="ECO:0007005"/>
    <property type="project" value="MGI"/>
</dbReference>
<dbReference type="GO" id="GO:0002161">
    <property type="term" value="F:aminoacyl-tRNA deacylase activity"/>
    <property type="evidence" value="ECO:0007669"/>
    <property type="project" value="InterPro"/>
</dbReference>
<dbReference type="GO" id="GO:0005524">
    <property type="term" value="F:ATP binding"/>
    <property type="evidence" value="ECO:0007669"/>
    <property type="project" value="UniProtKB-KW"/>
</dbReference>
<dbReference type="GO" id="GO:0004823">
    <property type="term" value="F:leucine-tRNA ligase activity"/>
    <property type="evidence" value="ECO:0007669"/>
    <property type="project" value="UniProtKB-EC"/>
</dbReference>
<dbReference type="GO" id="GO:0006429">
    <property type="term" value="P:leucyl-tRNA aminoacylation"/>
    <property type="evidence" value="ECO:0007669"/>
    <property type="project" value="Ensembl"/>
</dbReference>
<dbReference type="CDD" id="cd07958">
    <property type="entry name" value="Anticodon_Ia_Leu_BEm"/>
    <property type="match status" value="1"/>
</dbReference>
<dbReference type="CDD" id="cd00812">
    <property type="entry name" value="LeuRS_core"/>
    <property type="match status" value="1"/>
</dbReference>
<dbReference type="FunFam" id="3.40.50.620:FF:000003">
    <property type="entry name" value="Leucine--tRNA ligase"/>
    <property type="match status" value="1"/>
</dbReference>
<dbReference type="FunFam" id="1.10.730.10:FF:000011">
    <property type="entry name" value="Leucine--tRNA ligase chloroplastic/mitochondrial"/>
    <property type="match status" value="1"/>
</dbReference>
<dbReference type="FunFam" id="1.10.730.10:FF:000023">
    <property type="entry name" value="probable leucine--tRNA ligase, mitochondrial"/>
    <property type="match status" value="1"/>
</dbReference>
<dbReference type="FunFam" id="3.40.50.620:FF:000100">
    <property type="entry name" value="probable leucine--tRNA ligase, mitochondrial"/>
    <property type="match status" value="1"/>
</dbReference>
<dbReference type="Gene3D" id="3.40.50.620">
    <property type="entry name" value="HUPs"/>
    <property type="match status" value="2"/>
</dbReference>
<dbReference type="Gene3D" id="1.10.730.10">
    <property type="entry name" value="Isoleucyl-tRNA Synthetase, Domain 1"/>
    <property type="match status" value="1"/>
</dbReference>
<dbReference type="InterPro" id="IPR001412">
    <property type="entry name" value="aa-tRNA-synth_I_CS"/>
</dbReference>
<dbReference type="InterPro" id="IPR002300">
    <property type="entry name" value="aa-tRNA-synth_Ia"/>
</dbReference>
<dbReference type="InterPro" id="IPR002302">
    <property type="entry name" value="Leu-tRNA-ligase"/>
</dbReference>
<dbReference type="InterPro" id="IPR025709">
    <property type="entry name" value="Leu_tRNA-synth_edit"/>
</dbReference>
<dbReference type="InterPro" id="IPR013155">
    <property type="entry name" value="M/V/L/I-tRNA-synth_anticd-bd"/>
</dbReference>
<dbReference type="InterPro" id="IPR014729">
    <property type="entry name" value="Rossmann-like_a/b/a_fold"/>
</dbReference>
<dbReference type="InterPro" id="IPR009080">
    <property type="entry name" value="tRNAsynth_Ia_anticodon-bd"/>
</dbReference>
<dbReference type="InterPro" id="IPR009008">
    <property type="entry name" value="Val/Leu/Ile-tRNA-synth_edit"/>
</dbReference>
<dbReference type="NCBIfam" id="TIGR00396">
    <property type="entry name" value="leuS_bact"/>
    <property type="match status" value="1"/>
</dbReference>
<dbReference type="PANTHER" id="PTHR43740:SF2">
    <property type="entry name" value="LEUCINE--TRNA LIGASE, MITOCHONDRIAL"/>
    <property type="match status" value="1"/>
</dbReference>
<dbReference type="PANTHER" id="PTHR43740">
    <property type="entry name" value="LEUCYL-TRNA SYNTHETASE"/>
    <property type="match status" value="1"/>
</dbReference>
<dbReference type="Pfam" id="PF08264">
    <property type="entry name" value="Anticodon_1"/>
    <property type="match status" value="1"/>
</dbReference>
<dbReference type="Pfam" id="PF00133">
    <property type="entry name" value="tRNA-synt_1"/>
    <property type="match status" value="3"/>
</dbReference>
<dbReference type="Pfam" id="PF13603">
    <property type="entry name" value="tRNA-synt_1_2"/>
    <property type="match status" value="1"/>
</dbReference>
<dbReference type="PRINTS" id="PR00985">
    <property type="entry name" value="TRNASYNTHLEU"/>
</dbReference>
<dbReference type="SUPFAM" id="SSF47323">
    <property type="entry name" value="Anticodon-binding domain of a subclass of class I aminoacyl-tRNA synthetases"/>
    <property type="match status" value="1"/>
</dbReference>
<dbReference type="SUPFAM" id="SSF52374">
    <property type="entry name" value="Nucleotidylyl transferase"/>
    <property type="match status" value="1"/>
</dbReference>
<dbReference type="SUPFAM" id="SSF50677">
    <property type="entry name" value="ValRS/IleRS/LeuRS editing domain"/>
    <property type="match status" value="1"/>
</dbReference>
<dbReference type="PROSITE" id="PS00178">
    <property type="entry name" value="AA_TRNA_LIGASE_I"/>
    <property type="match status" value="1"/>
</dbReference>
<accession>Q8VDC0</accession>
<accession>A6H6S4</accession>
<reference key="1">
    <citation type="journal article" date="2002" name="Mamm. Genome">
        <title>Comparative human/murine sequence analysis of the common eliminated region 1 from human 3p21.3.</title>
        <authorList>
            <person name="Kiss H."/>
            <person name="Darai E."/>
            <person name="Kiss C."/>
            <person name="Kost-Alimova M."/>
            <person name="Klein G."/>
            <person name="Dumanski J.P."/>
            <person name="Imreh S."/>
        </authorList>
    </citation>
    <scope>NUCLEOTIDE SEQUENCE [MRNA]</scope>
    <source>
        <strain>BALB/cJ</strain>
    </source>
</reference>
<reference key="2">
    <citation type="journal article" date="2004" name="Genome Res.">
        <title>The status, quality, and expansion of the NIH full-length cDNA project: the Mammalian Gene Collection (MGC).</title>
        <authorList>
            <consortium name="The MGC Project Team"/>
        </authorList>
    </citation>
    <scope>NUCLEOTIDE SEQUENCE [LARGE SCALE MRNA]</scope>
    <source>
        <strain>C57BL/6J</strain>
        <tissue>Brain</tissue>
    </source>
</reference>
<reference key="3">
    <citation type="journal article" date="2010" name="Cell">
        <title>A tissue-specific atlas of mouse protein phosphorylation and expression.</title>
        <authorList>
            <person name="Huttlin E.L."/>
            <person name="Jedrychowski M.P."/>
            <person name="Elias J.E."/>
            <person name="Goswami T."/>
            <person name="Rad R."/>
            <person name="Beausoleil S.A."/>
            <person name="Villen J."/>
            <person name="Haas W."/>
            <person name="Sowa M.E."/>
            <person name="Gygi S.P."/>
        </authorList>
    </citation>
    <scope>IDENTIFICATION BY MASS SPECTROMETRY [LARGE SCALE ANALYSIS]</scope>
    <source>
        <tissue>Brain</tissue>
        <tissue>Brown adipose tissue</tissue>
        <tissue>Heart</tissue>
        <tissue>Kidney</tissue>
        <tissue>Liver</tissue>
        <tissue>Lung</tissue>
        <tissue>Pancreas</tissue>
        <tissue>Spleen</tissue>
        <tissue>Testis</tissue>
    </source>
</reference>
<reference key="4">
    <citation type="journal article" date="2013" name="Proc. Natl. Acad. Sci. U.S.A.">
        <title>Label-free quantitative proteomics of the lysine acetylome in mitochondria identifies substrates of SIRT3 in metabolic pathways.</title>
        <authorList>
            <person name="Rardin M.J."/>
            <person name="Newman J.C."/>
            <person name="Held J.M."/>
            <person name="Cusack M.P."/>
            <person name="Sorensen D.J."/>
            <person name="Li B."/>
            <person name="Schilling B."/>
            <person name="Mooney S.D."/>
            <person name="Kahn C.R."/>
            <person name="Verdin E."/>
            <person name="Gibson B.W."/>
        </authorList>
    </citation>
    <scope>ACETYLATION [LARGE SCALE ANALYSIS] AT LYS-67</scope>
    <scope>IDENTIFICATION BY MASS SPECTROMETRY [LARGE SCALE ANALYSIS]</scope>
    <source>
        <tissue>Liver</tissue>
    </source>
</reference>
<proteinExistence type="evidence at protein level"/>
<keyword id="KW-0007">Acetylation</keyword>
<keyword id="KW-0030">Aminoacyl-tRNA synthetase</keyword>
<keyword id="KW-0067">ATP-binding</keyword>
<keyword id="KW-0436">Ligase</keyword>
<keyword id="KW-0496">Mitochondrion</keyword>
<keyword id="KW-0547">Nucleotide-binding</keyword>
<keyword id="KW-0648">Protein biosynthesis</keyword>
<keyword id="KW-1185">Reference proteome</keyword>
<keyword id="KW-0809">Transit peptide</keyword>
<protein>
    <recommendedName>
        <fullName>Probable leucine--tRNA ligase, mitochondrial</fullName>
        <ecNumber>6.1.1.4</ecNumber>
    </recommendedName>
    <alternativeName>
        <fullName>Leucyl-tRNA synthetase</fullName>
        <shortName>LeuRS</shortName>
    </alternativeName>
</protein>